<reference key="1">
    <citation type="journal article" date="1999" name="Nature">
        <title>Genomic sequence comparison of two unrelated isolates of the human gastric pathogen Helicobacter pylori.</title>
        <authorList>
            <person name="Alm R.A."/>
            <person name="Ling L.-S.L."/>
            <person name="Moir D.T."/>
            <person name="King B.L."/>
            <person name="Brown E.D."/>
            <person name="Doig P.C."/>
            <person name="Smith D.R."/>
            <person name="Noonan B."/>
            <person name="Guild B.C."/>
            <person name="deJonge B.L."/>
            <person name="Carmel G."/>
            <person name="Tummino P.J."/>
            <person name="Caruso A."/>
            <person name="Uria-Nickelsen M."/>
            <person name="Mills D.M."/>
            <person name="Ives C."/>
            <person name="Gibson R."/>
            <person name="Merberg D."/>
            <person name="Mills S.D."/>
            <person name="Jiang Q."/>
            <person name="Taylor D.E."/>
            <person name="Vovis G.F."/>
            <person name="Trust T.J."/>
        </authorList>
    </citation>
    <scope>NUCLEOTIDE SEQUENCE [LARGE SCALE GENOMIC DNA]</scope>
    <source>
        <strain>J99 / ATCC 700824</strain>
    </source>
</reference>
<name>MSRAB_HELPJ</name>
<organism>
    <name type="scientific">Helicobacter pylori (strain J99 / ATCC 700824)</name>
    <name type="common">Campylobacter pylori J99</name>
    <dbReference type="NCBI Taxonomy" id="85963"/>
    <lineage>
        <taxon>Bacteria</taxon>
        <taxon>Pseudomonadati</taxon>
        <taxon>Campylobacterota</taxon>
        <taxon>Epsilonproteobacteria</taxon>
        <taxon>Campylobacterales</taxon>
        <taxon>Helicobacteraceae</taxon>
        <taxon>Helicobacter</taxon>
    </lineage>
</organism>
<gene>
    <name type="primary">msrAB</name>
    <name type="synonym">msrA</name>
    <name type="ordered locus">jhp_0210</name>
</gene>
<keyword id="KW-0511">Multifunctional enzyme</keyword>
<keyword id="KW-0560">Oxidoreductase</keyword>
<accession>Q9ZMK8</accession>
<proteinExistence type="inferred from homology"/>
<feature type="chain" id="PRO_0000138514" description="Peptide methionine sulfoxide reductase MsrA/MsrB">
    <location>
        <begin position="1"/>
        <end position="359"/>
    </location>
</feature>
<feature type="domain" description="MsrB" evidence="2">
    <location>
        <begin position="206"/>
        <end position="329"/>
    </location>
</feature>
<feature type="region of interest" description="Peptide methionine sulfoxide reductase A">
    <location>
        <begin position="36"/>
        <end position="189"/>
    </location>
</feature>
<feature type="active site" evidence="1">
    <location>
        <position position="44"/>
    </location>
</feature>
<feature type="active site" description="Nucleophile" evidence="2">
    <location>
        <position position="318"/>
    </location>
</feature>
<dbReference type="EC" id="1.8.4.11"/>
<dbReference type="EC" id="1.8.4.12"/>
<dbReference type="EMBL" id="AE001439">
    <property type="protein sequence ID" value="AAD05793.1"/>
    <property type="molecule type" value="Genomic_DNA"/>
</dbReference>
<dbReference type="PIR" id="E71960">
    <property type="entry name" value="E71960"/>
</dbReference>
<dbReference type="RefSeq" id="WP_000699028.1">
    <property type="nucleotide sequence ID" value="NC_000921.1"/>
</dbReference>
<dbReference type="SMR" id="Q9ZMK8"/>
<dbReference type="KEGG" id="hpj:jhp_0210"/>
<dbReference type="PATRIC" id="fig|85963.30.peg.807"/>
<dbReference type="eggNOG" id="COG0225">
    <property type="taxonomic scope" value="Bacteria"/>
</dbReference>
<dbReference type="eggNOG" id="COG0229">
    <property type="taxonomic scope" value="Bacteria"/>
</dbReference>
<dbReference type="Proteomes" id="UP000000804">
    <property type="component" value="Chromosome"/>
</dbReference>
<dbReference type="GO" id="GO:0005737">
    <property type="term" value="C:cytoplasm"/>
    <property type="evidence" value="ECO:0007669"/>
    <property type="project" value="TreeGrafter"/>
</dbReference>
<dbReference type="GO" id="GO:0033744">
    <property type="term" value="F:L-methionine:thioredoxin-disulfide S-oxidoreductase activity"/>
    <property type="evidence" value="ECO:0007669"/>
    <property type="project" value="RHEA"/>
</dbReference>
<dbReference type="GO" id="GO:0033743">
    <property type="term" value="F:peptide-methionine (R)-S-oxide reductase activity"/>
    <property type="evidence" value="ECO:0007669"/>
    <property type="project" value="UniProtKB-EC"/>
</dbReference>
<dbReference type="GO" id="GO:0008113">
    <property type="term" value="F:peptide-methionine (S)-S-oxide reductase activity"/>
    <property type="evidence" value="ECO:0007669"/>
    <property type="project" value="UniProtKB-UniRule"/>
</dbReference>
<dbReference type="GO" id="GO:0036211">
    <property type="term" value="P:protein modification process"/>
    <property type="evidence" value="ECO:0007669"/>
    <property type="project" value="UniProtKB-UniRule"/>
</dbReference>
<dbReference type="GO" id="GO:0030091">
    <property type="term" value="P:protein repair"/>
    <property type="evidence" value="ECO:0007669"/>
    <property type="project" value="InterPro"/>
</dbReference>
<dbReference type="GO" id="GO:0006979">
    <property type="term" value="P:response to oxidative stress"/>
    <property type="evidence" value="ECO:0007669"/>
    <property type="project" value="InterPro"/>
</dbReference>
<dbReference type="FunFam" id="3.30.1060.10:FF:000007">
    <property type="entry name" value="Peptide methionine sulfoxide reductase msrA/msrB"/>
    <property type="match status" value="1"/>
</dbReference>
<dbReference type="FunFam" id="2.170.150.20:FF:000003">
    <property type="entry name" value="Peptide methionine sulfoxide reductase MsrB"/>
    <property type="match status" value="1"/>
</dbReference>
<dbReference type="Gene3D" id="2.170.150.20">
    <property type="entry name" value="Peptide methionine sulfoxide reductase"/>
    <property type="match status" value="1"/>
</dbReference>
<dbReference type="Gene3D" id="3.30.1060.10">
    <property type="entry name" value="Peptide methionine sulphoxide reductase MsrA"/>
    <property type="match status" value="1"/>
</dbReference>
<dbReference type="HAMAP" id="MF_01401">
    <property type="entry name" value="MsrA"/>
    <property type="match status" value="1"/>
</dbReference>
<dbReference type="InterPro" id="IPR002569">
    <property type="entry name" value="Met_Sox_Rdtase_MsrA_dom"/>
</dbReference>
<dbReference type="InterPro" id="IPR036509">
    <property type="entry name" value="Met_Sox_Rdtase_MsrA_sf"/>
</dbReference>
<dbReference type="InterPro" id="IPR028427">
    <property type="entry name" value="Met_Sox_Rdtase_MsrB"/>
</dbReference>
<dbReference type="InterPro" id="IPR002579">
    <property type="entry name" value="Met_Sox_Rdtase_MsrB_dom"/>
</dbReference>
<dbReference type="InterPro" id="IPR011057">
    <property type="entry name" value="Mss4-like_sf"/>
</dbReference>
<dbReference type="NCBIfam" id="TIGR00401">
    <property type="entry name" value="msrA"/>
    <property type="match status" value="1"/>
</dbReference>
<dbReference type="NCBIfam" id="TIGR00357">
    <property type="entry name" value="peptide-methionine (R)-S-oxide reductase MsrB"/>
    <property type="match status" value="1"/>
</dbReference>
<dbReference type="PANTHER" id="PTHR10173">
    <property type="entry name" value="METHIONINE SULFOXIDE REDUCTASE"/>
    <property type="match status" value="1"/>
</dbReference>
<dbReference type="PANTHER" id="PTHR10173:SF59">
    <property type="entry name" value="PEPTIDE METHIONINE SULFOXIDE REDUCTASE MSRA_MSRB"/>
    <property type="match status" value="1"/>
</dbReference>
<dbReference type="Pfam" id="PF01625">
    <property type="entry name" value="PMSR"/>
    <property type="match status" value="1"/>
</dbReference>
<dbReference type="Pfam" id="PF01641">
    <property type="entry name" value="SelR"/>
    <property type="match status" value="1"/>
</dbReference>
<dbReference type="SUPFAM" id="SSF51316">
    <property type="entry name" value="Mss4-like"/>
    <property type="match status" value="1"/>
</dbReference>
<dbReference type="SUPFAM" id="SSF55068">
    <property type="entry name" value="Peptide methionine sulfoxide reductase"/>
    <property type="match status" value="1"/>
</dbReference>
<dbReference type="PROSITE" id="PS51790">
    <property type="entry name" value="MSRB"/>
    <property type="match status" value="1"/>
</dbReference>
<sequence>MKILSYLKKFYLFLLIGAIMQANESMGAKLPKTDERVIYLAGGCFWGLEAYMERIYGVIDASSGYANGKTSSTNYEKLHESDHAESVKVIYDPKKISLDKLLRYYFKVIDPVSVNKQGNDVGRQYRTGIYYVNSADKEVIDNALKALQKEVKGKIAIEVEPLKNYVRAEEYHQDYLKKHPGGYCHIDLKKADEVIVDDDKYTKPSDEVLKKKLTKLQYEVTQNKHTEKPFENEYYNKEEEGIYVDITTGEPLFSSADKYDSGCGWPSFSKPINKDVVKYEDDESLNRKRIEVLSRIGKAHLGHVFNDGPKELGGLRYCINSAALRFIPLKDMEKEGYGEFIPYIKKGELKKYIQDKKSH</sequence>
<protein>
    <recommendedName>
        <fullName>Peptide methionine sulfoxide reductase MsrA/MsrB</fullName>
    </recommendedName>
    <domain>
        <recommendedName>
            <fullName>Peptide methionine sulfoxide reductase MsrA</fullName>
            <shortName>Protein-methionine-S-oxide reductase</shortName>
            <ecNumber>1.8.4.11</ecNumber>
        </recommendedName>
        <alternativeName>
            <fullName>Peptide-methionine (S)-S-oxide reductase</fullName>
            <shortName>Peptide Met(O) reductase</shortName>
        </alternativeName>
    </domain>
    <domain>
        <recommendedName>
            <fullName>Peptide methionine sulfoxide reductase MsrB</fullName>
            <ecNumber>1.8.4.12</ecNumber>
        </recommendedName>
        <alternativeName>
            <fullName>Peptide-methionine (R)-S-oxide reductase</fullName>
        </alternativeName>
    </domain>
</protein>
<comment type="function">
    <text evidence="1">Has an important function as a repair enzyme for proteins that have been inactivated by oxidation. Catalyzes the reversible oxidation-reduction of methionine sulfoxide in proteins to methionine (By similarity).</text>
</comment>
<comment type="catalytic activity">
    <reaction>
        <text>L-methionyl-[protein] + [thioredoxin]-disulfide + H2O = L-methionyl-(S)-S-oxide-[protein] + [thioredoxin]-dithiol</text>
        <dbReference type="Rhea" id="RHEA:14217"/>
        <dbReference type="Rhea" id="RHEA-COMP:10698"/>
        <dbReference type="Rhea" id="RHEA-COMP:10700"/>
        <dbReference type="Rhea" id="RHEA-COMP:12313"/>
        <dbReference type="Rhea" id="RHEA-COMP:12315"/>
        <dbReference type="ChEBI" id="CHEBI:15377"/>
        <dbReference type="ChEBI" id="CHEBI:16044"/>
        <dbReference type="ChEBI" id="CHEBI:29950"/>
        <dbReference type="ChEBI" id="CHEBI:44120"/>
        <dbReference type="ChEBI" id="CHEBI:50058"/>
        <dbReference type="EC" id="1.8.4.11"/>
    </reaction>
</comment>
<comment type="catalytic activity">
    <reaction>
        <text>[thioredoxin]-disulfide + L-methionine + H2O = L-methionine (S)-S-oxide + [thioredoxin]-dithiol</text>
        <dbReference type="Rhea" id="RHEA:19993"/>
        <dbReference type="Rhea" id="RHEA-COMP:10698"/>
        <dbReference type="Rhea" id="RHEA-COMP:10700"/>
        <dbReference type="ChEBI" id="CHEBI:15377"/>
        <dbReference type="ChEBI" id="CHEBI:29950"/>
        <dbReference type="ChEBI" id="CHEBI:50058"/>
        <dbReference type="ChEBI" id="CHEBI:57844"/>
        <dbReference type="ChEBI" id="CHEBI:58772"/>
        <dbReference type="EC" id="1.8.4.11"/>
    </reaction>
</comment>
<comment type="catalytic activity">
    <reaction>
        <text>L-methionyl-[protein] + [thioredoxin]-disulfide + H2O = L-methionyl-(R)-S-oxide-[protein] + [thioredoxin]-dithiol</text>
        <dbReference type="Rhea" id="RHEA:24164"/>
        <dbReference type="Rhea" id="RHEA-COMP:10698"/>
        <dbReference type="Rhea" id="RHEA-COMP:10700"/>
        <dbReference type="Rhea" id="RHEA-COMP:12313"/>
        <dbReference type="Rhea" id="RHEA-COMP:12314"/>
        <dbReference type="ChEBI" id="CHEBI:15377"/>
        <dbReference type="ChEBI" id="CHEBI:16044"/>
        <dbReference type="ChEBI" id="CHEBI:29950"/>
        <dbReference type="ChEBI" id="CHEBI:45764"/>
        <dbReference type="ChEBI" id="CHEBI:50058"/>
        <dbReference type="EC" id="1.8.4.12"/>
    </reaction>
</comment>
<comment type="similarity">
    <text evidence="3">In the N-terminal section; belongs to the MsrA Met sulfoxide reductase family.</text>
</comment>
<comment type="similarity">
    <text evidence="3">In the C-terminal section; belongs to the MsrB Met sulfoxide reductase family.</text>
</comment>
<evidence type="ECO:0000250" key="1"/>
<evidence type="ECO:0000255" key="2">
    <source>
        <dbReference type="PROSITE-ProRule" id="PRU01126"/>
    </source>
</evidence>
<evidence type="ECO:0000305" key="3"/>